<comment type="function">
    <text evidence="2">Antimicrobial peptide.</text>
</comment>
<comment type="subcellular location">
    <subcellularLocation>
        <location evidence="3 4">Secreted</location>
    </subcellularLocation>
</comment>
<comment type="tissue specificity">
    <text evidence="6">Expressed by the skin glands.</text>
</comment>
<comment type="mass spectrometry" mass="2566.82" method="MALDI" evidence="4"/>
<comment type="similarity">
    <text evidence="3">Belongs to the frog skin active peptide (FSAP) family. Brevinin subfamily.</text>
</comment>
<feature type="signal peptide" evidence="3">
    <location>
        <begin position="1"/>
        <end position="22"/>
    </location>
</feature>
<feature type="propeptide" id="PRO_0000439434" evidence="6">
    <location>
        <begin position="23"/>
        <end position="42"/>
    </location>
</feature>
<feature type="peptide" id="PRO_0000439435" description="Lividin-1" evidence="4">
    <location>
        <begin position="45"/>
        <end position="68"/>
    </location>
</feature>
<feature type="disulfide bond" evidence="1">
    <location>
        <begin position="62"/>
        <end position="68"/>
    </location>
</feature>
<dbReference type="EMBL" id="AM039662">
    <property type="protein sequence ID" value="CAJ01670.1"/>
    <property type="molecule type" value="mRNA"/>
</dbReference>
<dbReference type="TCDB" id="1.C.52.1.28">
    <property type="family name" value="the dermaseptin (dermaseptin) family"/>
</dbReference>
<dbReference type="GO" id="GO:0005576">
    <property type="term" value="C:extracellular region"/>
    <property type="evidence" value="ECO:0007669"/>
    <property type="project" value="UniProtKB-SubCell"/>
</dbReference>
<dbReference type="GO" id="GO:0050829">
    <property type="term" value="P:defense response to Gram-negative bacterium"/>
    <property type="evidence" value="ECO:0007669"/>
    <property type="project" value="UniProtKB-ARBA"/>
</dbReference>
<dbReference type="GO" id="GO:0050830">
    <property type="term" value="P:defense response to Gram-positive bacterium"/>
    <property type="evidence" value="ECO:0007669"/>
    <property type="project" value="UniProtKB-ARBA"/>
</dbReference>
<dbReference type="InterPro" id="IPR012520">
    <property type="entry name" value="Antimicrobial_frog_1"/>
</dbReference>
<dbReference type="InterPro" id="IPR004275">
    <property type="entry name" value="Frog_antimicrobial_propeptide"/>
</dbReference>
<dbReference type="Pfam" id="PF08018">
    <property type="entry name" value="Antimicrobial_1"/>
    <property type="match status" value="1"/>
</dbReference>
<dbReference type="Pfam" id="PF03032">
    <property type="entry name" value="FSAP_sig_propep"/>
    <property type="match status" value="1"/>
</dbReference>
<protein>
    <recommendedName>
        <fullName evidence="5">Lividin-1</fullName>
    </recommendedName>
</protein>
<proteinExistence type="evidence at protein level"/>
<keyword id="KW-0878">Amphibian defense peptide</keyword>
<keyword id="KW-0929">Antimicrobial</keyword>
<keyword id="KW-0165">Cleavage on pair of basic residues</keyword>
<keyword id="KW-0903">Direct protein sequencing</keyword>
<keyword id="KW-1015">Disulfide bond</keyword>
<keyword id="KW-0964">Secreted</keyword>
<keyword id="KW-0732">Signal</keyword>
<organism evidence="7">
    <name type="scientific">Odorrana livida</name>
    <name type="common">Green mountain frog</name>
    <name type="synonym">Polypedates lividus</name>
    <dbReference type="NCBI Taxonomy" id="121160"/>
    <lineage>
        <taxon>Eukaryota</taxon>
        <taxon>Metazoa</taxon>
        <taxon>Chordata</taxon>
        <taxon>Craniata</taxon>
        <taxon>Vertebrata</taxon>
        <taxon>Euteleostomi</taxon>
        <taxon>Amphibia</taxon>
        <taxon>Batrachia</taxon>
        <taxon>Anura</taxon>
        <taxon>Neobatrachia</taxon>
        <taxon>Ranoidea</taxon>
        <taxon>Ranidae</taxon>
        <taxon>Odorrana</taxon>
    </lineage>
</organism>
<reference evidence="7" key="1">
    <citation type="journal article" date="2006" name="Peptides">
        <title>Lividins: novel antimicrobial peptide homologs from the skin secretion of the Chinese Large Odorous frog, Rana (Odorrana) livida. Identification by 'shotgun' cDNA cloning and sequence analysis.</title>
        <authorList>
            <person name="Zhou M."/>
            <person name="Chen T."/>
            <person name="Walker B."/>
            <person name="Shaw C."/>
        </authorList>
    </citation>
    <scope>NUCLEOTIDE SEQUENCE [MRNA]</scope>
    <scope>PROTEIN SEQUENCE OF 45-68</scope>
    <scope>SUBCELLULAR LOCATION</scope>
    <scope>MASS SPECTROMETRY</scope>
    <scope>IDENTIFICATION BY MASS SPECTROMETRY</scope>
    <source>
        <tissue evidence="5">Skin secretion</tissue>
    </source>
</reference>
<evidence type="ECO:0000250" key="1">
    <source>
        <dbReference type="UniProtKB" id="A0AEI6"/>
    </source>
</evidence>
<evidence type="ECO:0000250" key="2">
    <source>
        <dbReference type="UniProtKB" id="E7EKE0"/>
    </source>
</evidence>
<evidence type="ECO:0000255" key="3"/>
<evidence type="ECO:0000269" key="4">
    <source>
    </source>
</evidence>
<evidence type="ECO:0000303" key="5">
    <source>
    </source>
</evidence>
<evidence type="ECO:0000305" key="6">
    <source>
    </source>
</evidence>
<evidence type="ECO:0000312" key="7">
    <source>
        <dbReference type="EMBL" id="CAJ01670.1"/>
    </source>
</evidence>
<accession>Q2UXR4</accession>
<sequence length="68" mass="7864">MFTLKKSLLLLFFLGTINLSLCQEERNADEEERRDERNVEVEKRILPFVAGVAAEMMQHVYCAASKKC</sequence>
<name>LDN1_ODOLI</name>